<accession>P66677</accession>
<accession>Q48WU3</accession>
<accession>Q99Y70</accession>
<reference key="1">
    <citation type="journal article" date="2001" name="Proc. Natl. Acad. Sci. U.S.A.">
        <title>Complete genome sequence of an M1 strain of Streptococcus pyogenes.</title>
        <authorList>
            <person name="Ferretti J.J."/>
            <person name="McShan W.M."/>
            <person name="Ajdic D.J."/>
            <person name="Savic D.J."/>
            <person name="Savic G."/>
            <person name="Lyon K."/>
            <person name="Primeaux C."/>
            <person name="Sezate S."/>
            <person name="Suvorov A.N."/>
            <person name="Kenton S."/>
            <person name="Lai H.S."/>
            <person name="Lin S.P."/>
            <person name="Qian Y."/>
            <person name="Jia H.G."/>
            <person name="Najar F.Z."/>
            <person name="Ren Q."/>
            <person name="Zhu H."/>
            <person name="Song L."/>
            <person name="White J."/>
            <person name="Yuan X."/>
            <person name="Clifton S.W."/>
            <person name="Roe B.A."/>
            <person name="McLaughlin R.E."/>
        </authorList>
    </citation>
    <scope>NUCLEOTIDE SEQUENCE [LARGE SCALE GENOMIC DNA]</scope>
    <source>
        <strain>ATCC 700294 / SF370 / Serotype M1</strain>
    </source>
</reference>
<reference key="2">
    <citation type="journal article" date="2005" name="J. Infect. Dis.">
        <title>Evolutionary origin and emergence of a highly successful clone of serotype M1 group A Streptococcus involved multiple horizontal gene transfer events.</title>
        <authorList>
            <person name="Sumby P."/>
            <person name="Porcella S.F."/>
            <person name="Madrigal A.G."/>
            <person name="Barbian K.D."/>
            <person name="Virtaneva K."/>
            <person name="Ricklefs S.M."/>
            <person name="Sturdevant D.E."/>
            <person name="Graham M.R."/>
            <person name="Vuopio-Varkila J."/>
            <person name="Hoe N.P."/>
            <person name="Musser J.M."/>
        </authorList>
    </citation>
    <scope>NUCLEOTIDE SEQUENCE [LARGE SCALE GENOMIC DNA]</scope>
    <source>
        <strain>ATCC BAA-947 / MGAS5005 / Serotype M1</strain>
    </source>
</reference>
<dbReference type="EC" id="3.1.26.4" evidence="1"/>
<dbReference type="EMBL" id="AE004092">
    <property type="protein sequence ID" value="AAK34562.1"/>
    <property type="molecule type" value="Genomic_DNA"/>
</dbReference>
<dbReference type="EMBL" id="CP000017">
    <property type="protein sequence ID" value="AAZ52182.1"/>
    <property type="molecule type" value="Genomic_DNA"/>
</dbReference>
<dbReference type="RefSeq" id="NP_269841.1">
    <property type="nucleotide sequence ID" value="NC_002737.2"/>
</dbReference>
<dbReference type="SMR" id="P66677"/>
<dbReference type="PaxDb" id="1314-HKU360_01686"/>
<dbReference type="KEGG" id="spy:SPy_1841"/>
<dbReference type="KEGG" id="spz:M5005_Spy1564"/>
<dbReference type="PATRIC" id="fig|160490.10.peg.1599"/>
<dbReference type="HOGENOM" id="CLU_059546_1_0_9"/>
<dbReference type="OMA" id="GCTITAY"/>
<dbReference type="Proteomes" id="UP000000750">
    <property type="component" value="Chromosome"/>
</dbReference>
<dbReference type="GO" id="GO:0005737">
    <property type="term" value="C:cytoplasm"/>
    <property type="evidence" value="ECO:0007669"/>
    <property type="project" value="UniProtKB-SubCell"/>
</dbReference>
<dbReference type="GO" id="GO:0032299">
    <property type="term" value="C:ribonuclease H2 complex"/>
    <property type="evidence" value="ECO:0007669"/>
    <property type="project" value="TreeGrafter"/>
</dbReference>
<dbReference type="GO" id="GO:0000287">
    <property type="term" value="F:magnesium ion binding"/>
    <property type="evidence" value="ECO:0007669"/>
    <property type="project" value="UniProtKB-UniRule"/>
</dbReference>
<dbReference type="GO" id="GO:0003723">
    <property type="term" value="F:RNA binding"/>
    <property type="evidence" value="ECO:0007669"/>
    <property type="project" value="InterPro"/>
</dbReference>
<dbReference type="GO" id="GO:0004523">
    <property type="term" value="F:RNA-DNA hybrid ribonuclease activity"/>
    <property type="evidence" value="ECO:0007669"/>
    <property type="project" value="UniProtKB-UniRule"/>
</dbReference>
<dbReference type="GO" id="GO:0043137">
    <property type="term" value="P:DNA replication, removal of RNA primer"/>
    <property type="evidence" value="ECO:0007669"/>
    <property type="project" value="TreeGrafter"/>
</dbReference>
<dbReference type="GO" id="GO:0006298">
    <property type="term" value="P:mismatch repair"/>
    <property type="evidence" value="ECO:0007669"/>
    <property type="project" value="TreeGrafter"/>
</dbReference>
<dbReference type="CDD" id="cd06590">
    <property type="entry name" value="RNase_HII_bacteria_HIII_like"/>
    <property type="match status" value="1"/>
</dbReference>
<dbReference type="CDD" id="cd14796">
    <property type="entry name" value="RNAse_HIII_N"/>
    <property type="match status" value="1"/>
</dbReference>
<dbReference type="FunFam" id="3.30.420.10:FF:000047">
    <property type="entry name" value="Ribonuclease HIII"/>
    <property type="match status" value="1"/>
</dbReference>
<dbReference type="Gene3D" id="3.30.420.10">
    <property type="entry name" value="Ribonuclease H-like superfamily/Ribonuclease H"/>
    <property type="match status" value="1"/>
</dbReference>
<dbReference type="Gene3D" id="3.30.310.10">
    <property type="entry name" value="TATA-Binding Protein"/>
    <property type="match status" value="1"/>
</dbReference>
<dbReference type="HAMAP" id="MF_00053">
    <property type="entry name" value="RNase_HIII"/>
    <property type="match status" value="1"/>
</dbReference>
<dbReference type="InterPro" id="IPR001352">
    <property type="entry name" value="RNase_HII/HIII"/>
</dbReference>
<dbReference type="InterPro" id="IPR024567">
    <property type="entry name" value="RNase_HII/HIII_dom"/>
</dbReference>
<dbReference type="InterPro" id="IPR004641">
    <property type="entry name" value="RNase_HIII"/>
</dbReference>
<dbReference type="InterPro" id="IPR024568">
    <property type="entry name" value="RNase_HIII_N"/>
</dbReference>
<dbReference type="InterPro" id="IPR012337">
    <property type="entry name" value="RNaseH-like_sf"/>
</dbReference>
<dbReference type="InterPro" id="IPR036397">
    <property type="entry name" value="RNaseH_sf"/>
</dbReference>
<dbReference type="InterPro" id="IPR012295">
    <property type="entry name" value="TBP_dom_sf"/>
</dbReference>
<dbReference type="NCBIfam" id="TIGR00716">
    <property type="entry name" value="rnhC"/>
    <property type="match status" value="1"/>
</dbReference>
<dbReference type="PANTHER" id="PTHR10954:SF23">
    <property type="entry name" value="RIBONUCLEASE"/>
    <property type="match status" value="1"/>
</dbReference>
<dbReference type="PANTHER" id="PTHR10954">
    <property type="entry name" value="RIBONUCLEASE H2 SUBUNIT A"/>
    <property type="match status" value="1"/>
</dbReference>
<dbReference type="Pfam" id="PF11858">
    <property type="entry name" value="DUF3378"/>
    <property type="match status" value="1"/>
</dbReference>
<dbReference type="Pfam" id="PF01351">
    <property type="entry name" value="RNase_HII"/>
    <property type="match status" value="1"/>
</dbReference>
<dbReference type="PIRSF" id="PIRSF037748">
    <property type="entry name" value="RnhC"/>
    <property type="match status" value="1"/>
</dbReference>
<dbReference type="SUPFAM" id="SSF53098">
    <property type="entry name" value="Ribonuclease H-like"/>
    <property type="match status" value="1"/>
</dbReference>
<dbReference type="PROSITE" id="PS51975">
    <property type="entry name" value="RNASE_H_2"/>
    <property type="match status" value="1"/>
</dbReference>
<feature type="chain" id="PRO_0000111703" description="Ribonuclease HIII">
    <location>
        <begin position="1"/>
        <end position="300"/>
    </location>
</feature>
<feature type="domain" description="RNase H type-2" evidence="2">
    <location>
        <begin position="83"/>
        <end position="300"/>
    </location>
</feature>
<feature type="binding site" evidence="1">
    <location>
        <position position="89"/>
    </location>
    <ligand>
        <name>a divalent metal cation</name>
        <dbReference type="ChEBI" id="CHEBI:60240"/>
    </ligand>
</feature>
<feature type="binding site" evidence="1">
    <location>
        <position position="90"/>
    </location>
    <ligand>
        <name>a divalent metal cation</name>
        <dbReference type="ChEBI" id="CHEBI:60240"/>
    </ligand>
</feature>
<feature type="binding site" evidence="1">
    <location>
        <position position="194"/>
    </location>
    <ligand>
        <name>a divalent metal cation</name>
        <dbReference type="ChEBI" id="CHEBI:60240"/>
    </ligand>
</feature>
<protein>
    <recommendedName>
        <fullName evidence="1">Ribonuclease HIII</fullName>
        <shortName evidence="1">RNase HIII</shortName>
        <ecNumber evidence="1">3.1.26.4</ecNumber>
    </recommendedName>
</protein>
<evidence type="ECO:0000255" key="1">
    <source>
        <dbReference type="HAMAP-Rule" id="MF_00053"/>
    </source>
</evidence>
<evidence type="ECO:0000255" key="2">
    <source>
        <dbReference type="PROSITE-ProRule" id="PRU01319"/>
    </source>
</evidence>
<organism>
    <name type="scientific">Streptococcus pyogenes serotype M1</name>
    <dbReference type="NCBI Taxonomy" id="301447"/>
    <lineage>
        <taxon>Bacteria</taxon>
        <taxon>Bacillati</taxon>
        <taxon>Bacillota</taxon>
        <taxon>Bacilli</taxon>
        <taxon>Lactobacillales</taxon>
        <taxon>Streptococcaceae</taxon>
        <taxon>Streptococcus</taxon>
    </lineage>
</organism>
<keyword id="KW-0963">Cytoplasm</keyword>
<keyword id="KW-0255">Endonuclease</keyword>
<keyword id="KW-0378">Hydrolase</keyword>
<keyword id="KW-0460">Magnesium</keyword>
<keyword id="KW-0479">Metal-binding</keyword>
<keyword id="KW-0540">Nuclease</keyword>
<keyword id="KW-1185">Reference proteome</keyword>
<gene>
    <name evidence="1" type="primary">rnhC</name>
    <name type="ordered locus">SPy_1841</name>
    <name type="ordered locus">M5005_Spy1564</name>
</gene>
<proteinExistence type="inferred from homology"/>
<name>RNH3_STRP1</name>
<sequence length="300" mass="32655">MNTLVLKIDAILSKHLKKQLAPYTISSQNTYVAFAAKKNGVTVLLYKSGKLVLQGNGANALAQELNLPVAKTVFEASNNSQDIPIIGSDEVGNGSYFGGIAVVASFVDPKDHSFLKKLGVDDSKKLSDKTIQQIAPLLEKQIPHQSLLLSPKKYNELVGKSKPYNAISIKVALHNQAIFLLLQKGIQPKQIVIDAFTSQSNYEKHLKKEKNHFPNPLTFQEKAESHYLAVAVSSIIARNLFLDNLDQLGQDLGYQLPSGAGSASDKVASQLLAAYGMSSLEYSAKLHFANTHKAQALLTK</sequence>
<comment type="function">
    <text evidence="1">Endonuclease that specifically degrades the RNA of RNA-DNA hybrids.</text>
</comment>
<comment type="catalytic activity">
    <reaction evidence="1">
        <text>Endonucleolytic cleavage to 5'-phosphomonoester.</text>
        <dbReference type="EC" id="3.1.26.4"/>
    </reaction>
</comment>
<comment type="cofactor">
    <cofactor evidence="1">
        <name>Mn(2+)</name>
        <dbReference type="ChEBI" id="CHEBI:29035"/>
    </cofactor>
    <cofactor evidence="1">
        <name>Mg(2+)</name>
        <dbReference type="ChEBI" id="CHEBI:18420"/>
    </cofactor>
    <text evidence="1">Manganese or magnesium. Binds 1 divalent metal ion per monomer in the absence of substrate. May bind a second metal ion after substrate binding.</text>
</comment>
<comment type="subcellular location">
    <subcellularLocation>
        <location evidence="1">Cytoplasm</location>
    </subcellularLocation>
</comment>
<comment type="similarity">
    <text evidence="1">Belongs to the RNase HII family. RnhC subfamily.</text>
</comment>